<feature type="chain" id="PRO_0000197847" description="Exodeoxyribonuclease 7 large subunit">
    <location>
        <begin position="1"/>
        <end position="456"/>
    </location>
</feature>
<comment type="function">
    <text evidence="1">Bidirectionally degrades single-stranded DNA into large acid-insoluble oligonucleotides, which are then degraded further into small acid-soluble oligonucleotides.</text>
</comment>
<comment type="catalytic activity">
    <reaction evidence="1">
        <text>Exonucleolytic cleavage in either 5'- to 3'- or 3'- to 5'-direction to yield nucleoside 5'-phosphates.</text>
        <dbReference type="EC" id="3.1.11.6"/>
    </reaction>
</comment>
<comment type="subunit">
    <text evidence="1">Heterooligomer composed of large and small subunits.</text>
</comment>
<comment type="subcellular location">
    <subcellularLocation>
        <location evidence="1">Cytoplasm</location>
    </subcellularLocation>
</comment>
<comment type="similarity">
    <text evidence="1">Belongs to the XseA family.</text>
</comment>
<dbReference type="EC" id="3.1.11.6" evidence="1"/>
<dbReference type="EMBL" id="AE005174">
    <property type="protein sequence ID" value="AAG57620.1"/>
    <property type="molecule type" value="Genomic_DNA"/>
</dbReference>
<dbReference type="EMBL" id="BA000007">
    <property type="protein sequence ID" value="BAB36794.1"/>
    <property type="molecule type" value="Genomic_DNA"/>
</dbReference>
<dbReference type="PIR" id="C91050">
    <property type="entry name" value="C91050"/>
</dbReference>
<dbReference type="PIR" id="H85894">
    <property type="entry name" value="H85894"/>
</dbReference>
<dbReference type="RefSeq" id="NP_311398.1">
    <property type="nucleotide sequence ID" value="NC_002695.1"/>
</dbReference>
<dbReference type="RefSeq" id="WP_000937887.1">
    <property type="nucleotide sequence ID" value="NZ_VOAI01000001.1"/>
</dbReference>
<dbReference type="SMR" id="Q8XAB0"/>
<dbReference type="STRING" id="155864.Z3773"/>
<dbReference type="GeneID" id="912353"/>
<dbReference type="KEGG" id="ece:Z3773"/>
<dbReference type="KEGG" id="ecs:ECs_3371"/>
<dbReference type="PATRIC" id="fig|386585.9.peg.3522"/>
<dbReference type="eggNOG" id="COG1570">
    <property type="taxonomic scope" value="Bacteria"/>
</dbReference>
<dbReference type="HOGENOM" id="CLU_023625_3_1_6"/>
<dbReference type="OMA" id="WPAVRFE"/>
<dbReference type="Proteomes" id="UP000000558">
    <property type="component" value="Chromosome"/>
</dbReference>
<dbReference type="Proteomes" id="UP000002519">
    <property type="component" value="Chromosome"/>
</dbReference>
<dbReference type="GO" id="GO:0005737">
    <property type="term" value="C:cytoplasm"/>
    <property type="evidence" value="ECO:0007669"/>
    <property type="project" value="UniProtKB-SubCell"/>
</dbReference>
<dbReference type="GO" id="GO:0009318">
    <property type="term" value="C:exodeoxyribonuclease VII complex"/>
    <property type="evidence" value="ECO:0007669"/>
    <property type="project" value="InterPro"/>
</dbReference>
<dbReference type="GO" id="GO:0008855">
    <property type="term" value="F:exodeoxyribonuclease VII activity"/>
    <property type="evidence" value="ECO:0007669"/>
    <property type="project" value="UniProtKB-UniRule"/>
</dbReference>
<dbReference type="GO" id="GO:0003676">
    <property type="term" value="F:nucleic acid binding"/>
    <property type="evidence" value="ECO:0007669"/>
    <property type="project" value="InterPro"/>
</dbReference>
<dbReference type="GO" id="GO:0006308">
    <property type="term" value="P:DNA catabolic process"/>
    <property type="evidence" value="ECO:0007669"/>
    <property type="project" value="UniProtKB-UniRule"/>
</dbReference>
<dbReference type="CDD" id="cd04489">
    <property type="entry name" value="ExoVII_LU_OBF"/>
    <property type="match status" value="1"/>
</dbReference>
<dbReference type="HAMAP" id="MF_00378">
    <property type="entry name" value="Exonuc_7_L"/>
    <property type="match status" value="1"/>
</dbReference>
<dbReference type="InterPro" id="IPR003753">
    <property type="entry name" value="Exonuc_VII_L"/>
</dbReference>
<dbReference type="InterPro" id="IPR020579">
    <property type="entry name" value="Exonuc_VII_lsu_C"/>
</dbReference>
<dbReference type="InterPro" id="IPR025824">
    <property type="entry name" value="OB-fold_nuc-bd_dom"/>
</dbReference>
<dbReference type="NCBIfam" id="TIGR00237">
    <property type="entry name" value="xseA"/>
    <property type="match status" value="1"/>
</dbReference>
<dbReference type="PANTHER" id="PTHR30008">
    <property type="entry name" value="EXODEOXYRIBONUCLEASE 7 LARGE SUBUNIT"/>
    <property type="match status" value="1"/>
</dbReference>
<dbReference type="PANTHER" id="PTHR30008:SF0">
    <property type="entry name" value="EXODEOXYRIBONUCLEASE 7 LARGE SUBUNIT"/>
    <property type="match status" value="1"/>
</dbReference>
<dbReference type="Pfam" id="PF02601">
    <property type="entry name" value="Exonuc_VII_L"/>
    <property type="match status" value="1"/>
</dbReference>
<dbReference type="Pfam" id="PF13742">
    <property type="entry name" value="tRNA_anti_2"/>
    <property type="match status" value="1"/>
</dbReference>
<protein>
    <recommendedName>
        <fullName evidence="1">Exodeoxyribonuclease 7 large subunit</fullName>
        <ecNumber evidence="1">3.1.11.6</ecNumber>
    </recommendedName>
    <alternativeName>
        <fullName evidence="1">Exodeoxyribonuclease VII large subunit</fullName>
        <shortName evidence="1">Exonuclease VII large subunit</shortName>
    </alternativeName>
</protein>
<evidence type="ECO:0000255" key="1">
    <source>
        <dbReference type="HAMAP-Rule" id="MF_00378"/>
    </source>
</evidence>
<reference key="1">
    <citation type="journal article" date="2001" name="Nature">
        <title>Genome sequence of enterohaemorrhagic Escherichia coli O157:H7.</title>
        <authorList>
            <person name="Perna N.T."/>
            <person name="Plunkett G. III"/>
            <person name="Burland V."/>
            <person name="Mau B."/>
            <person name="Glasner J.D."/>
            <person name="Rose D.J."/>
            <person name="Mayhew G.F."/>
            <person name="Evans P.S."/>
            <person name="Gregor J."/>
            <person name="Kirkpatrick H.A."/>
            <person name="Posfai G."/>
            <person name="Hackett J."/>
            <person name="Klink S."/>
            <person name="Boutin A."/>
            <person name="Shao Y."/>
            <person name="Miller L."/>
            <person name="Grotbeck E.J."/>
            <person name="Davis N.W."/>
            <person name="Lim A."/>
            <person name="Dimalanta E.T."/>
            <person name="Potamousis K."/>
            <person name="Apodaca J."/>
            <person name="Anantharaman T.S."/>
            <person name="Lin J."/>
            <person name="Yen G."/>
            <person name="Schwartz D.C."/>
            <person name="Welch R.A."/>
            <person name="Blattner F.R."/>
        </authorList>
    </citation>
    <scope>NUCLEOTIDE SEQUENCE [LARGE SCALE GENOMIC DNA]</scope>
    <source>
        <strain>O157:H7 / EDL933 / ATCC 700927 / EHEC</strain>
    </source>
</reference>
<reference key="2">
    <citation type="journal article" date="2001" name="DNA Res.">
        <title>Complete genome sequence of enterohemorrhagic Escherichia coli O157:H7 and genomic comparison with a laboratory strain K-12.</title>
        <authorList>
            <person name="Hayashi T."/>
            <person name="Makino K."/>
            <person name="Ohnishi M."/>
            <person name="Kurokawa K."/>
            <person name="Ishii K."/>
            <person name="Yokoyama K."/>
            <person name="Han C.-G."/>
            <person name="Ohtsubo E."/>
            <person name="Nakayama K."/>
            <person name="Murata T."/>
            <person name="Tanaka M."/>
            <person name="Tobe T."/>
            <person name="Iida T."/>
            <person name="Takami H."/>
            <person name="Honda T."/>
            <person name="Sasakawa C."/>
            <person name="Ogasawara N."/>
            <person name="Yasunaga T."/>
            <person name="Kuhara S."/>
            <person name="Shiba T."/>
            <person name="Hattori M."/>
            <person name="Shinagawa H."/>
        </authorList>
    </citation>
    <scope>NUCLEOTIDE SEQUENCE [LARGE SCALE GENOMIC DNA]</scope>
    <source>
        <strain>O157:H7 / Sakai / RIMD 0509952 / EHEC</strain>
    </source>
</reference>
<keyword id="KW-0963">Cytoplasm</keyword>
<keyword id="KW-0269">Exonuclease</keyword>
<keyword id="KW-0378">Hydrolase</keyword>
<keyword id="KW-0540">Nuclease</keyword>
<keyword id="KW-1185">Reference proteome</keyword>
<sequence length="456" mass="51734">MLPSQSPAIFTVSRLNQTVRLLLEHEMGQVWISGEISNFTQPASGHWYFTLKDDTAQVRCAMFRNSNRRVTFRPQHGQQVLVRANITLYEPRGDYQIIVESMQPAGEGLLQQKYEQLKAKLQAEGLFDLQYKKPLPSPAHCVGVITSKTGAALHDILHVLKRRDPSLPVIIYPTAVQGDDAPGQIVRAIELANQCNECDVLIVGRGGGSLEDLWSFNDERVARAIFASRIPVVSAVGHETDVTIADFVADLRAPTPSAAAEVVSRNQQELLRQVQSTRQRLEMAMDYYLANRTRRFTQIHHRLQQQHPQLRLARQQTMLERLQKRMSFALENQLKRAGQQQQRLTQRLNQQNPQPKIHRAQTRIQQLEYRLAETLRAQLSATRERFGNAVTHLEAVSPLSTLARGYSVTTATDGKVLKKVKQVKAGEMLTTRLEDGWVESEVKNIQPVKKSRKKVH</sequence>
<accession>Q8XAB0</accession>
<proteinExistence type="inferred from homology"/>
<organism>
    <name type="scientific">Escherichia coli O157:H7</name>
    <dbReference type="NCBI Taxonomy" id="83334"/>
    <lineage>
        <taxon>Bacteria</taxon>
        <taxon>Pseudomonadati</taxon>
        <taxon>Pseudomonadota</taxon>
        <taxon>Gammaproteobacteria</taxon>
        <taxon>Enterobacterales</taxon>
        <taxon>Enterobacteriaceae</taxon>
        <taxon>Escherichia</taxon>
    </lineage>
</organism>
<name>EX7L_ECO57</name>
<gene>
    <name evidence="1" type="primary">xseA</name>
    <name type="ordered locus">Z3773</name>
    <name type="ordered locus">ECs3371</name>
</gene>